<protein>
    <recommendedName>
        <fullName>Protein DGCR6L</fullName>
    </recommendedName>
    <alternativeName>
        <fullName>DiGeorge syndrome critical region 6-like protein</fullName>
    </alternativeName>
</protein>
<comment type="function">
    <text>May play a role in neural crest cell migration into the third and fourth pharyngeal pouches.</text>
</comment>
<comment type="interaction">
    <interactant intactId="EBI-742953">
        <id>Q9BY27</id>
    </interactant>
    <interactant intactId="EBI-10173507">
        <id>Q6UY14-3</id>
        <label>ADAMTSL4</label>
    </interactant>
    <organismsDiffer>false</organismsDiffer>
    <experiments>3</experiments>
</comment>
<comment type="interaction">
    <interactant intactId="EBI-742953">
        <id>Q9BY27</id>
    </interactant>
    <interactant intactId="EBI-11954292">
        <id>Q86V38</id>
        <label>ATN1</label>
    </interactant>
    <organismsDiffer>false</organismsDiffer>
    <experiments>3</experiments>
</comment>
<comment type="interaction">
    <interactant intactId="EBI-742953">
        <id>Q9BY27</id>
    </interactant>
    <interactant intactId="EBI-8640233">
        <id>Q5T686</id>
        <label>AVPI1</label>
    </interactant>
    <organismsDiffer>false</organismsDiffer>
    <experiments>3</experiments>
</comment>
<comment type="interaction">
    <interactant intactId="EBI-742953">
        <id>Q9BY27</id>
    </interactant>
    <interactant intactId="EBI-17278014">
        <id>Q8IZR5-2</id>
        <label>CMTM4</label>
    </interactant>
    <organismsDiffer>false</organismsDiffer>
    <experiments>3</experiments>
</comment>
<comment type="interaction">
    <interactant intactId="EBI-742953">
        <id>Q9BY27</id>
    </interactant>
    <interactant intactId="EBI-748597">
        <id>Q05D60</id>
        <label>DEUP1</label>
    </interactant>
    <organismsDiffer>false</organismsDiffer>
    <experiments>9</experiments>
</comment>
<comment type="interaction">
    <interactant intactId="EBI-742953">
        <id>Q9BY27</id>
    </interactant>
    <interactant intactId="EBI-9090198">
        <id>P15976-2</id>
        <label>GATA1</label>
    </interactant>
    <organismsDiffer>false</organismsDiffer>
    <experiments>3</experiments>
</comment>
<comment type="interaction">
    <interactant intactId="EBI-742953">
        <id>Q9BY27</id>
    </interactant>
    <interactant intactId="EBI-12108696">
        <id>Q9UJY5-4</id>
        <label>GGA1</label>
    </interactant>
    <organismsDiffer>false</organismsDiffer>
    <experiments>3</experiments>
</comment>
<comment type="interaction">
    <interactant intactId="EBI-742953">
        <id>Q9BY27</id>
    </interactant>
    <interactant intactId="EBI-740641">
        <id>Q9NP66</id>
        <label>HMG20A</label>
    </interactant>
    <organismsDiffer>false</organismsDiffer>
    <experiments>3</experiments>
</comment>
<comment type="interaction">
    <interactant intactId="EBI-742953">
        <id>Q9BY27</id>
    </interactant>
    <interactant intactId="EBI-2881520">
        <id>Q9NRY2</id>
        <label>INIP</label>
    </interactant>
    <organismsDiffer>false</organismsDiffer>
    <experiments>6</experiments>
</comment>
<comment type="interaction">
    <interactant intactId="EBI-742953">
        <id>Q9BY27</id>
    </interactant>
    <interactant intactId="EBI-948001">
        <id>Q15323</id>
        <label>KRT31</label>
    </interactant>
    <organismsDiffer>false</organismsDiffer>
    <experiments>3</experiments>
</comment>
<comment type="interaction">
    <interactant intactId="EBI-742953">
        <id>Q9BY27</id>
    </interactant>
    <interactant intactId="EBI-2865580">
        <id>O43679</id>
        <label>LDB2</label>
    </interactant>
    <organismsDiffer>false</organismsDiffer>
    <experiments>3</experiments>
</comment>
<comment type="interaction">
    <interactant intactId="EBI-742953">
        <id>Q9BY27</id>
    </interactant>
    <interactant intactId="EBI-17658306">
        <id>Q96II8-3</id>
        <label>LRCH3</label>
    </interactant>
    <organismsDiffer>false</organismsDiffer>
    <experiments>3</experiments>
</comment>
<comment type="interaction">
    <interactant intactId="EBI-742953">
        <id>Q9BY27</id>
    </interactant>
    <interactant intactId="EBI-741037">
        <id>Q9BRK4</id>
        <label>LZTS2</label>
    </interactant>
    <organismsDiffer>false</organismsDiffer>
    <experiments>3</experiments>
</comment>
<comment type="interaction">
    <interactant intactId="EBI-742953">
        <id>Q9BY27</id>
    </interactant>
    <interactant intactId="EBI-10172526">
        <id>Q9UJV3-2</id>
        <label>MID2</label>
    </interactant>
    <organismsDiffer>false</organismsDiffer>
    <experiments>6</experiments>
</comment>
<comment type="interaction">
    <interactant intactId="EBI-742953">
        <id>Q9BY27</id>
    </interactant>
    <interactant intactId="EBI-8641936">
        <id>Q15742</id>
        <label>NAB2</label>
    </interactant>
    <organismsDiffer>false</organismsDiffer>
    <experiments>3</experiments>
</comment>
<comment type="interaction">
    <interactant intactId="EBI-742953">
        <id>Q9BY27</id>
    </interactant>
    <interactant intactId="EBI-10172876">
        <id>Q7Z6G3-2</id>
        <label>NECAB2</label>
    </interactant>
    <organismsDiffer>false</organismsDiffer>
    <experiments>3</experiments>
</comment>
<comment type="interaction">
    <interactant intactId="EBI-742953">
        <id>Q9BY27</id>
    </interactant>
    <interactant intactId="EBI-943588">
        <id>Q16633</id>
        <label>POU2AF1</label>
    </interactant>
    <organismsDiffer>false</organismsDiffer>
    <experiments>3</experiments>
</comment>
<comment type="interaction">
    <interactant intactId="EBI-742953">
        <id>Q9BY27</id>
    </interactant>
    <interactant intactId="EBI-1105153">
        <id>Q96KQ4</id>
        <label>PPP1R13B</label>
    </interactant>
    <organismsDiffer>false</organismsDiffer>
    <experiments>3</experiments>
</comment>
<comment type="interaction">
    <interactant intactId="EBI-742953">
        <id>Q9BY27</id>
    </interactant>
    <interactant intactId="EBI-10182375">
        <id>Q9UFD9</id>
        <label>RIMBP3</label>
    </interactant>
    <organismsDiffer>false</organismsDiffer>
    <experiments>3</experiments>
</comment>
<comment type="interaction">
    <interactant intactId="EBI-742953">
        <id>Q9BY27</id>
    </interactant>
    <interactant intactId="EBI-375617">
        <id>P02549</id>
        <label>SPTA1</label>
    </interactant>
    <organismsDiffer>false</organismsDiffer>
    <experiments>3</experiments>
</comment>
<comment type="interaction">
    <interactant intactId="EBI-742953">
        <id>Q9BY27</id>
    </interactant>
    <interactant intactId="EBI-4395669">
        <id>Q6ZNG0</id>
        <label>ZNF620</label>
    </interactant>
    <organismsDiffer>false</organismsDiffer>
    <experiments>3</experiments>
</comment>
<comment type="interaction">
    <interactant intactId="EBI-742953">
        <id>Q9BY27</id>
    </interactant>
    <interactant intactId="EBI-9675698">
        <id>P14079</id>
        <label>tax</label>
    </interactant>
    <organismsDiffer>true</organismsDiffer>
    <experiments>3</experiments>
</comment>
<comment type="subcellular location">
    <subcellularLocation>
        <location evidence="3">Nucleus</location>
    </subcellularLocation>
    <text>Predominantly nuclear.</text>
</comment>
<comment type="tissue specificity">
    <text evidence="2 3">Widely expressed in fetal and adult tissues. Highest expression in liver, heart and skeletal muscle. Lower levels in pancreas and placenta. Weak expression in brain.</text>
</comment>
<comment type="similarity">
    <text evidence="4">Belongs to the gonadal family.</text>
</comment>
<gene>
    <name type="primary">DGCR6L</name>
</gene>
<evidence type="ECO:0000255" key="1"/>
<evidence type="ECO:0000269" key="2">
    <source>
    </source>
</evidence>
<evidence type="ECO:0000269" key="3">
    <source>
    </source>
</evidence>
<evidence type="ECO:0000305" key="4"/>
<keyword id="KW-0175">Coiled coil</keyword>
<keyword id="KW-0539">Nucleus</keyword>
<keyword id="KW-0597">Phosphoprotein</keyword>
<keyword id="KW-1267">Proteomics identification</keyword>
<keyword id="KW-1185">Reference proteome</keyword>
<reference key="1">
    <citation type="journal article" date="2001" name="Genome Res.">
        <title>Two functional copies of the DGCR6 gene are present on human chromosome 22q11 due to a duplication of an ancestral locus.</title>
        <authorList>
            <person name="Edelmann L."/>
            <person name="Stankiewicz P."/>
            <person name="Spiteri E."/>
            <person name="Pandita R.K."/>
            <person name="Shaffer L."/>
            <person name="Lupski J."/>
            <person name="Morrow B.E."/>
        </authorList>
    </citation>
    <scope>NUCLEOTIDE SEQUENCE [GENOMIC DNA / MRNA]</scope>
    <scope>TISSUE SPECIFICITY</scope>
    <source>
        <tissue>Fetal spleen</tissue>
    </source>
</reference>
<reference key="2">
    <citation type="journal article" date="2005" name="Hum. Genet.">
        <title>Biochemical characterisation of the proteins encoded by the DiGeorge critical region 6 (DGCR6) genes.</title>
        <authorList>
            <person name="Pfuhl T."/>
            <person name="Duerr M."/>
            <person name="Spurk A."/>
            <person name="Schwalbert B."/>
            <person name="Nord R."/>
            <person name="Mysliwietz J."/>
            <person name="Kremmer E."/>
            <person name="Graesser F.A."/>
        </authorList>
    </citation>
    <scope>NUCLEOTIDE SEQUENCE [MRNA]</scope>
    <scope>TISSUE SPECIFICITY</scope>
    <scope>SUBCELLULAR LOCATION</scope>
    <scope>PHOSPHORYLATION</scope>
    <source>
        <tissue>Fetal brain</tissue>
    </source>
</reference>
<reference key="3">
    <citation type="journal article" date="2004" name="Genome Biol.">
        <title>A genome annotation-driven approach to cloning the human ORFeome.</title>
        <authorList>
            <person name="Collins J.E."/>
            <person name="Wright C.L."/>
            <person name="Edwards C.A."/>
            <person name="Davis M.P."/>
            <person name="Grinham J.A."/>
            <person name="Cole C.G."/>
            <person name="Goward M.E."/>
            <person name="Aguado B."/>
            <person name="Mallya M."/>
            <person name="Mokrab Y."/>
            <person name="Huckle E.J."/>
            <person name="Beare D.M."/>
            <person name="Dunham I."/>
        </authorList>
    </citation>
    <scope>NUCLEOTIDE SEQUENCE [LARGE SCALE MRNA]</scope>
</reference>
<reference key="4">
    <citation type="journal article" date="2004" name="Nat. Genet.">
        <title>Complete sequencing and characterization of 21,243 full-length human cDNAs.</title>
        <authorList>
            <person name="Ota T."/>
            <person name="Suzuki Y."/>
            <person name="Nishikawa T."/>
            <person name="Otsuki T."/>
            <person name="Sugiyama T."/>
            <person name="Irie R."/>
            <person name="Wakamatsu A."/>
            <person name="Hayashi K."/>
            <person name="Sato H."/>
            <person name="Nagai K."/>
            <person name="Kimura K."/>
            <person name="Makita H."/>
            <person name="Sekine M."/>
            <person name="Obayashi M."/>
            <person name="Nishi T."/>
            <person name="Shibahara T."/>
            <person name="Tanaka T."/>
            <person name="Ishii S."/>
            <person name="Yamamoto J."/>
            <person name="Saito K."/>
            <person name="Kawai Y."/>
            <person name="Isono Y."/>
            <person name="Nakamura Y."/>
            <person name="Nagahari K."/>
            <person name="Murakami K."/>
            <person name="Yasuda T."/>
            <person name="Iwayanagi T."/>
            <person name="Wagatsuma M."/>
            <person name="Shiratori A."/>
            <person name="Sudo H."/>
            <person name="Hosoiri T."/>
            <person name="Kaku Y."/>
            <person name="Kodaira H."/>
            <person name="Kondo H."/>
            <person name="Sugawara M."/>
            <person name="Takahashi M."/>
            <person name="Kanda K."/>
            <person name="Yokoi T."/>
            <person name="Furuya T."/>
            <person name="Kikkawa E."/>
            <person name="Omura Y."/>
            <person name="Abe K."/>
            <person name="Kamihara K."/>
            <person name="Katsuta N."/>
            <person name="Sato K."/>
            <person name="Tanikawa M."/>
            <person name="Yamazaki M."/>
            <person name="Ninomiya K."/>
            <person name="Ishibashi T."/>
            <person name="Yamashita H."/>
            <person name="Murakawa K."/>
            <person name="Fujimori K."/>
            <person name="Tanai H."/>
            <person name="Kimata M."/>
            <person name="Watanabe M."/>
            <person name="Hiraoka S."/>
            <person name="Chiba Y."/>
            <person name="Ishida S."/>
            <person name="Ono Y."/>
            <person name="Takiguchi S."/>
            <person name="Watanabe S."/>
            <person name="Yosida M."/>
            <person name="Hotuta T."/>
            <person name="Kusano J."/>
            <person name="Kanehori K."/>
            <person name="Takahashi-Fujii A."/>
            <person name="Hara H."/>
            <person name="Tanase T.-O."/>
            <person name="Nomura Y."/>
            <person name="Togiya S."/>
            <person name="Komai F."/>
            <person name="Hara R."/>
            <person name="Takeuchi K."/>
            <person name="Arita M."/>
            <person name="Imose N."/>
            <person name="Musashino K."/>
            <person name="Yuuki H."/>
            <person name="Oshima A."/>
            <person name="Sasaki N."/>
            <person name="Aotsuka S."/>
            <person name="Yoshikawa Y."/>
            <person name="Matsunawa H."/>
            <person name="Ichihara T."/>
            <person name="Shiohata N."/>
            <person name="Sano S."/>
            <person name="Moriya S."/>
            <person name="Momiyama H."/>
            <person name="Satoh N."/>
            <person name="Takami S."/>
            <person name="Terashima Y."/>
            <person name="Suzuki O."/>
            <person name="Nakagawa S."/>
            <person name="Senoh A."/>
            <person name="Mizoguchi H."/>
            <person name="Goto Y."/>
            <person name="Shimizu F."/>
            <person name="Wakebe H."/>
            <person name="Hishigaki H."/>
            <person name="Watanabe T."/>
            <person name="Sugiyama A."/>
            <person name="Takemoto M."/>
            <person name="Kawakami B."/>
            <person name="Yamazaki M."/>
            <person name="Watanabe K."/>
            <person name="Kumagai A."/>
            <person name="Itakura S."/>
            <person name="Fukuzumi Y."/>
            <person name="Fujimori Y."/>
            <person name="Komiyama M."/>
            <person name="Tashiro H."/>
            <person name="Tanigami A."/>
            <person name="Fujiwara T."/>
            <person name="Ono T."/>
            <person name="Yamada K."/>
            <person name="Fujii Y."/>
            <person name="Ozaki K."/>
            <person name="Hirao M."/>
            <person name="Ohmori Y."/>
            <person name="Kawabata A."/>
            <person name="Hikiji T."/>
            <person name="Kobatake N."/>
            <person name="Inagaki H."/>
            <person name="Ikema Y."/>
            <person name="Okamoto S."/>
            <person name="Okitani R."/>
            <person name="Kawakami T."/>
            <person name="Noguchi S."/>
            <person name="Itoh T."/>
            <person name="Shigeta K."/>
            <person name="Senba T."/>
            <person name="Matsumura K."/>
            <person name="Nakajima Y."/>
            <person name="Mizuno T."/>
            <person name="Morinaga M."/>
            <person name="Sasaki M."/>
            <person name="Togashi T."/>
            <person name="Oyama M."/>
            <person name="Hata H."/>
            <person name="Watanabe M."/>
            <person name="Komatsu T."/>
            <person name="Mizushima-Sugano J."/>
            <person name="Satoh T."/>
            <person name="Shirai Y."/>
            <person name="Takahashi Y."/>
            <person name="Nakagawa K."/>
            <person name="Okumura K."/>
            <person name="Nagase T."/>
            <person name="Nomura N."/>
            <person name="Kikuchi H."/>
            <person name="Masuho Y."/>
            <person name="Yamashita R."/>
            <person name="Nakai K."/>
            <person name="Yada T."/>
            <person name="Nakamura Y."/>
            <person name="Ohara O."/>
            <person name="Isogai T."/>
            <person name="Sugano S."/>
        </authorList>
    </citation>
    <scope>NUCLEOTIDE SEQUENCE [LARGE SCALE MRNA]</scope>
    <source>
        <tissue>Hippocampus</tissue>
    </source>
</reference>
<reference key="5">
    <citation type="submission" date="2005-09" db="EMBL/GenBank/DDBJ databases">
        <authorList>
            <person name="Mural R.J."/>
            <person name="Istrail S."/>
            <person name="Sutton G.G."/>
            <person name="Florea L."/>
            <person name="Halpern A.L."/>
            <person name="Mobarry C.M."/>
            <person name="Lippert R."/>
            <person name="Walenz B."/>
            <person name="Shatkay H."/>
            <person name="Dew I."/>
            <person name="Miller J.R."/>
            <person name="Flanigan M.J."/>
            <person name="Edwards N.J."/>
            <person name="Bolanos R."/>
            <person name="Fasulo D."/>
            <person name="Halldorsson B.V."/>
            <person name="Hannenhalli S."/>
            <person name="Turner R."/>
            <person name="Yooseph S."/>
            <person name="Lu F."/>
            <person name="Nusskern D.R."/>
            <person name="Shue B.C."/>
            <person name="Zheng X.H."/>
            <person name="Zhong F."/>
            <person name="Delcher A.L."/>
            <person name="Huson D.H."/>
            <person name="Kravitz S.A."/>
            <person name="Mouchard L."/>
            <person name="Reinert K."/>
            <person name="Remington K.A."/>
            <person name="Clark A.G."/>
            <person name="Waterman M.S."/>
            <person name="Eichler E.E."/>
            <person name="Adams M.D."/>
            <person name="Hunkapiller M.W."/>
            <person name="Myers E.W."/>
            <person name="Venter J.C."/>
        </authorList>
    </citation>
    <scope>NUCLEOTIDE SEQUENCE [LARGE SCALE GENOMIC DNA]</scope>
</reference>
<reference key="6">
    <citation type="journal article" date="2004" name="Genome Res.">
        <title>The status, quality, and expansion of the NIH full-length cDNA project: the Mammalian Gene Collection (MGC).</title>
        <authorList>
            <consortium name="The MGC Project Team"/>
        </authorList>
    </citation>
    <scope>NUCLEOTIDE SEQUENCE [LARGE SCALE MRNA]</scope>
    <source>
        <tissue>Colon</tissue>
    </source>
</reference>
<sequence>MERYAAALEEVADGARQQERHYQLLSALQSLVKELPSSFQQRLSYTTLSDLALALLDGTVFEIVQGLLEIQHLTEKSLYNQRLRLQNEHRVLRQALRQKHQEAQQACRPHNLPVVQAAQQRELEAVEHRIREEQRAMDQKIILELDRKVADQQSTLEKAGVAGFYVTTNPQELMLQMNLLELIRKLQQRGCRAGNAALGLGGPWQSPAAQCDQKGSPVPP</sequence>
<organism>
    <name type="scientific">Homo sapiens</name>
    <name type="common">Human</name>
    <dbReference type="NCBI Taxonomy" id="9606"/>
    <lineage>
        <taxon>Eukaryota</taxon>
        <taxon>Metazoa</taxon>
        <taxon>Chordata</taxon>
        <taxon>Craniata</taxon>
        <taxon>Vertebrata</taxon>
        <taxon>Euteleostomi</taxon>
        <taxon>Mammalia</taxon>
        <taxon>Eutheria</taxon>
        <taxon>Euarchontoglires</taxon>
        <taxon>Primates</taxon>
        <taxon>Haplorrhini</taxon>
        <taxon>Catarrhini</taxon>
        <taxon>Hominidae</taxon>
        <taxon>Homo</taxon>
    </lineage>
</organism>
<feature type="chain" id="PRO_0000070260" description="Protein DGCR6L">
    <location>
        <begin position="1"/>
        <end position="220"/>
    </location>
</feature>
<feature type="coiled-coil region" evidence="1">
    <location>
        <begin position="76"/>
        <end position="159"/>
    </location>
</feature>
<feature type="sequence variant" id="VAR_055870" description="In dbSNP:rs1056818.">
    <original>V</original>
    <variation>L</variation>
    <location>
        <position position="115"/>
    </location>
</feature>
<feature type="sequence variant" id="VAR_055871" description="In dbSNP:rs1056804.">
    <original>N</original>
    <variation>K</variation>
    <location>
        <position position="195"/>
    </location>
</feature>
<feature type="sequence conflict" description="In Ref. 1; AAK15585." evidence="4" ref="1">
    <original>G</original>
    <variation>S</variation>
    <location>
        <position position="14"/>
    </location>
</feature>
<feature type="sequence conflict" description="In Ref. 4; BAG50932." evidence="4" ref="4">
    <original>Q</original>
    <variation>R</variation>
    <location>
        <position position="81"/>
    </location>
</feature>
<dbReference type="EMBL" id="AF228708">
    <property type="protein sequence ID" value="AAK15585.1"/>
    <property type="molecule type" value="mRNA"/>
</dbReference>
<dbReference type="EMBL" id="CR456361">
    <property type="protein sequence ID" value="CAG30247.1"/>
    <property type="molecule type" value="mRNA"/>
</dbReference>
<dbReference type="EMBL" id="AK001528">
    <property type="protein sequence ID" value="BAG50932.1"/>
    <property type="molecule type" value="mRNA"/>
</dbReference>
<dbReference type="EMBL" id="AK289952">
    <property type="protein sequence ID" value="BAF82641.1"/>
    <property type="molecule type" value="mRNA"/>
</dbReference>
<dbReference type="EMBL" id="CH471176">
    <property type="protein sequence ID" value="EAX02973.1"/>
    <property type="molecule type" value="Genomic_DNA"/>
</dbReference>
<dbReference type="EMBL" id="CH471176">
    <property type="protein sequence ID" value="EAX02974.1"/>
    <property type="molecule type" value="Genomic_DNA"/>
</dbReference>
<dbReference type="EMBL" id="BC000682">
    <property type="protein sequence ID" value="AAH00682.1"/>
    <property type="molecule type" value="mRNA"/>
</dbReference>
<dbReference type="CCDS" id="CCDS13778.1"/>
<dbReference type="RefSeq" id="NP_150282.2">
    <property type="nucleotide sequence ID" value="NM_033257.4"/>
</dbReference>
<dbReference type="SMR" id="Q9BY27"/>
<dbReference type="BioGRID" id="124488">
    <property type="interactions" value="30"/>
</dbReference>
<dbReference type="FunCoup" id="Q9BY27">
    <property type="interactions" value="157"/>
</dbReference>
<dbReference type="IntAct" id="Q9BY27">
    <property type="interactions" value="29"/>
</dbReference>
<dbReference type="MINT" id="Q9BY27"/>
<dbReference type="STRING" id="9606.ENSP00000248879"/>
<dbReference type="GlyGen" id="Q9BY27">
    <property type="glycosylation" value="1 site, 1 O-linked glycan (1 site)"/>
</dbReference>
<dbReference type="iPTMnet" id="Q9BY27"/>
<dbReference type="PhosphoSitePlus" id="Q9BY27"/>
<dbReference type="BioMuta" id="DGCR6L"/>
<dbReference type="DMDM" id="22001579"/>
<dbReference type="jPOST" id="Q9BY27"/>
<dbReference type="MassIVE" id="Q9BY27"/>
<dbReference type="PaxDb" id="9606-ENSP00000248879"/>
<dbReference type="PeptideAtlas" id="Q9BY27"/>
<dbReference type="ProteomicsDB" id="79570"/>
<dbReference type="Pumba" id="Q9BY27"/>
<dbReference type="Antibodypedia" id="23165">
    <property type="antibodies" value="150 antibodies from 20 providers"/>
</dbReference>
<dbReference type="DNASU" id="85359"/>
<dbReference type="Ensembl" id="ENST00000248879.8">
    <property type="protein sequence ID" value="ENSP00000248879.2"/>
    <property type="gene ID" value="ENSG00000128185.10"/>
</dbReference>
<dbReference type="GeneID" id="85359"/>
<dbReference type="KEGG" id="hsa:85359"/>
<dbReference type="MANE-Select" id="ENST00000248879.8">
    <property type="protein sequence ID" value="ENSP00000248879.2"/>
    <property type="RefSeq nucleotide sequence ID" value="NM_033257.4"/>
    <property type="RefSeq protein sequence ID" value="NP_150282.2"/>
</dbReference>
<dbReference type="UCSC" id="uc002zrx.4">
    <property type="organism name" value="human"/>
</dbReference>
<dbReference type="AGR" id="HGNC:18551"/>
<dbReference type="CTD" id="85359"/>
<dbReference type="DisGeNET" id="85359"/>
<dbReference type="GeneCards" id="DGCR6L"/>
<dbReference type="HGNC" id="HGNC:18551">
    <property type="gene designation" value="DGCR6L"/>
</dbReference>
<dbReference type="HPA" id="ENSG00000128185">
    <property type="expression patterns" value="Low tissue specificity"/>
</dbReference>
<dbReference type="MalaCards" id="DGCR6L"/>
<dbReference type="MIM" id="609459">
    <property type="type" value="gene"/>
</dbReference>
<dbReference type="neXtProt" id="NX_Q9BY27"/>
<dbReference type="OpenTargets" id="ENSG00000128185"/>
<dbReference type="PharmGKB" id="PA38570"/>
<dbReference type="VEuPathDB" id="HostDB:ENSG00000128185"/>
<dbReference type="eggNOG" id="KOG4810">
    <property type="taxonomic scope" value="Eukaryota"/>
</dbReference>
<dbReference type="GeneTree" id="ENSGT00390000017663"/>
<dbReference type="HOGENOM" id="CLU_096921_1_1_1"/>
<dbReference type="InParanoid" id="Q9BY27"/>
<dbReference type="OMA" id="GHDINTE"/>
<dbReference type="OrthoDB" id="9532930at2759"/>
<dbReference type="PAN-GO" id="Q9BY27">
    <property type="GO annotations" value="0 GO annotations based on evolutionary models"/>
</dbReference>
<dbReference type="PhylomeDB" id="Q9BY27"/>
<dbReference type="TreeFam" id="TF324608"/>
<dbReference type="PathwayCommons" id="Q9BY27"/>
<dbReference type="SignaLink" id="Q9BY27"/>
<dbReference type="BioGRID-ORCS" id="85359">
    <property type="hits" value="30 hits in 1065 CRISPR screens"/>
</dbReference>
<dbReference type="ChiTaRS" id="DGCR6L">
    <property type="organism name" value="human"/>
</dbReference>
<dbReference type="GenomeRNAi" id="85359"/>
<dbReference type="Pharos" id="Q9BY27">
    <property type="development level" value="Tbio"/>
</dbReference>
<dbReference type="PRO" id="PR:Q9BY27"/>
<dbReference type="Proteomes" id="UP000005640">
    <property type="component" value="Chromosome 22"/>
</dbReference>
<dbReference type="RNAct" id="Q9BY27">
    <property type="molecule type" value="protein"/>
</dbReference>
<dbReference type="Bgee" id="ENSG00000128185">
    <property type="expression patterns" value="Expressed in right testis and 99 other cell types or tissues"/>
</dbReference>
<dbReference type="ExpressionAtlas" id="Q9BY27">
    <property type="expression patterns" value="baseline and differential"/>
</dbReference>
<dbReference type="GO" id="GO:0005634">
    <property type="term" value="C:nucleus"/>
    <property type="evidence" value="ECO:0007669"/>
    <property type="project" value="UniProtKB-SubCell"/>
</dbReference>
<dbReference type="InterPro" id="IPR010849">
    <property type="entry name" value="Gonadal"/>
</dbReference>
<dbReference type="PANTHER" id="PTHR13054">
    <property type="entry name" value="DIGEORGE SYNDROME CRITICAL REGION 6 DGCR6 FAMILY MEMBER"/>
    <property type="match status" value="1"/>
</dbReference>
<dbReference type="PANTHER" id="PTHR13054:SF6">
    <property type="entry name" value="PROTEIN DGCR6L"/>
    <property type="match status" value="1"/>
</dbReference>
<dbReference type="Pfam" id="PF07324">
    <property type="entry name" value="DGCR6"/>
    <property type="match status" value="1"/>
</dbReference>
<name>DGC6L_HUMAN</name>
<proteinExistence type="evidence at protein level"/>
<accession>Q9BY27</accession>
<accession>A8K1N7</accession>
<accession>B3KMC0</accession>
<accession>D3DX29</accession>
<accession>Q9BW33</accession>